<accession>O66728</accession>
<protein>
    <recommendedName>
        <fullName evidence="5">A-adding tRNA nucleotidyltransferase</fullName>
        <shortName evidence="5">A-adding TNT</shortName>
        <ecNumber evidence="2">2.7.7.-</ecNumber>
    </recommendedName>
    <alternativeName>
        <fullName evidence="4">A-adding enzyme</fullName>
    </alternativeName>
</protein>
<sequence length="824" mass="94658">MVCPKVVILSEGADLDSLSAAYGVLKLYPDAYLLKPKHLSKKAGEVFKKYRDKFRVIEDLPDCFELVLVDTHFLPEGLPRERIKRIIVYDHHPIGDVKEFEGKIEKVGAATTLVVEEIKEKGIDINPRDATLLAFGIYEDTGNFTYEGTTPRDALALAFLLEKGANLREIREVVMETYTPEQIEAVGKIVQSIEKVFINGRQISFATAVLERYQPDINTLLYEIKDLKESDAFFVIIEAEGKTYVFGRSQSEDVDVGEILSHFGGGGHREAGAVKLENVSAERIKELIKAFLKRKYVKLKVRDIMNTPPFVLEEHVSVKDALTELSERGIANAPVINREGKLVGIISKKALLKLVKLYPDEPIELFVNRDFYTLSPDAPVWEAEEILTKFGQKLIPVVEDGTVVGVVTRLDILQAVKEDLEKLKEKRRKIKVPENIEEIAREVGQIAKEMGLRAYIVGGVVRDILLGKEVWDVDFVVEGNAIELAKELARRHGVNVHPFPEFGTAHLKIGKLKLEFATARRETYPRPGAYPKVEPASLKEDLIRRDFTINAMAISVNLEDYGTLIDYFGGLRDLKDKVIRVLHPVSFIEDPVRILRALRFAGRLNFKLSRSTEKLLKQAVNLGLLKEAPRGRLINEIKLALREDRFLEILELYRKYRVLEEIIEGFQWNEKVLQKLYALRKVVDWHALEFSEERIDYGWLYLLILISNLDYERGKHFLEEMSAPSWVRETYKFMKFKLGSLKEELKKAKENYEVYRLLKPLHTSVLLLLMLEEELKEKIKLYLEKLRKVKLPKEKIEELKKQGLKGKELGERIEELKREIMNKI</sequence>
<feature type="chain" id="PRO_0000447563" description="A-adding tRNA nucleotidyltransferase">
    <location>
        <begin position="1"/>
        <end position="824"/>
    </location>
</feature>
<feature type="domain" description="CBS 1" evidence="1">
    <location>
        <begin position="305"/>
        <end position="363"/>
    </location>
</feature>
<feature type="domain" description="CBS 2" evidence="1">
    <location>
        <begin position="367"/>
        <end position="423"/>
    </location>
</feature>
<feature type="binding site" evidence="3 6">
    <location>
        <begin position="459"/>
        <end position="462"/>
    </location>
    <ligand>
        <name>ATP</name>
        <dbReference type="ChEBI" id="CHEBI:30616"/>
    </ligand>
</feature>
<feature type="binding site" evidence="7">
    <location>
        <position position="472"/>
    </location>
    <ligand>
        <name>Mg(2+)</name>
        <dbReference type="ChEBI" id="CHEBI:18420"/>
    </ligand>
</feature>
<feature type="binding site" evidence="7">
    <location>
        <position position="474"/>
    </location>
    <ligand>
        <name>Mg(2+)</name>
        <dbReference type="ChEBI" id="CHEBI:18420"/>
    </ligand>
</feature>
<feature type="binding site" evidence="3 6">
    <location>
        <begin position="545"/>
        <end position="546"/>
    </location>
    <ligand>
        <name>ATP</name>
        <dbReference type="ChEBI" id="CHEBI:30616"/>
    </ligand>
</feature>
<feature type="binding site" evidence="3">
    <location>
        <position position="550"/>
    </location>
    <ligand>
        <name>ATP</name>
        <dbReference type="ChEBI" id="CHEBI:30616"/>
    </ligand>
</feature>
<feature type="binding site" evidence="3">
    <location>
        <begin position="590"/>
        <end position="599"/>
    </location>
    <ligand>
        <name>ATP</name>
        <dbReference type="ChEBI" id="CHEBI:30616"/>
    </ligand>
</feature>
<feature type="binding site" evidence="3">
    <location>
        <position position="603"/>
    </location>
    <ligand>
        <name>ATP</name>
        <dbReference type="ChEBI" id="CHEBI:30616"/>
    </ligand>
</feature>
<feature type="binding site" evidence="3">
    <location>
        <position position="632"/>
    </location>
    <ligand>
        <name>ATP</name>
        <dbReference type="ChEBI" id="CHEBI:30616"/>
    </ligand>
</feature>
<feature type="helix" evidence="22">
    <location>
        <begin position="434"/>
        <end position="449"/>
    </location>
</feature>
<feature type="strand" evidence="22">
    <location>
        <begin position="453"/>
        <end position="457"/>
    </location>
</feature>
<feature type="helix" evidence="22">
    <location>
        <begin position="459"/>
        <end position="465"/>
    </location>
</feature>
<feature type="strand" evidence="22">
    <location>
        <begin position="472"/>
        <end position="479"/>
    </location>
</feature>
<feature type="helix" evidence="22">
    <location>
        <begin position="481"/>
        <end position="492"/>
    </location>
</feature>
<feature type="strand" evidence="22">
    <location>
        <begin position="496"/>
        <end position="499"/>
    </location>
</feature>
<feature type="turn" evidence="22">
    <location>
        <begin position="500"/>
        <end position="503"/>
    </location>
</feature>
<feature type="strand" evidence="22">
    <location>
        <begin position="504"/>
        <end position="509"/>
    </location>
</feature>
<feature type="strand" evidence="22">
    <location>
        <begin position="512"/>
        <end position="518"/>
    </location>
</feature>
<feature type="helix" evidence="22">
    <location>
        <begin position="538"/>
        <end position="543"/>
    </location>
</feature>
<feature type="strand" evidence="22">
    <location>
        <begin position="545"/>
        <end position="547"/>
    </location>
</feature>
<feature type="helix" evidence="22">
    <location>
        <begin position="548"/>
        <end position="550"/>
    </location>
</feature>
<feature type="strand" evidence="22">
    <location>
        <begin position="553"/>
        <end position="555"/>
    </location>
</feature>
<feature type="helix" evidence="21">
    <location>
        <begin position="558"/>
        <end position="560"/>
    </location>
</feature>
<feature type="strand" evidence="22">
    <location>
        <begin position="563"/>
        <end position="565"/>
    </location>
</feature>
<feature type="strand" evidence="22">
    <location>
        <begin position="567"/>
        <end position="569"/>
    </location>
</feature>
<feature type="helix" evidence="22">
    <location>
        <begin position="570"/>
        <end position="576"/>
    </location>
</feature>
<feature type="strand" evidence="22">
    <location>
        <begin position="581"/>
        <end position="583"/>
    </location>
</feature>
<feature type="helix" evidence="22">
    <location>
        <begin position="586"/>
        <end position="589"/>
    </location>
</feature>
<feature type="helix" evidence="22">
    <location>
        <begin position="592"/>
        <end position="604"/>
    </location>
</feature>
<feature type="helix" evidence="22">
    <location>
        <begin position="610"/>
        <end position="621"/>
    </location>
</feature>
<feature type="turn" evidence="22">
    <location>
        <begin position="622"/>
        <end position="627"/>
    </location>
</feature>
<feature type="helix" evidence="22">
    <location>
        <begin position="630"/>
        <end position="641"/>
    </location>
</feature>
<feature type="strand" evidence="24">
    <location>
        <begin position="643"/>
        <end position="645"/>
    </location>
</feature>
<feature type="helix" evidence="22">
    <location>
        <begin position="646"/>
        <end position="655"/>
    </location>
</feature>
<feature type="helix" evidence="22">
    <location>
        <begin position="659"/>
        <end position="661"/>
    </location>
</feature>
<feature type="strand" evidence="25">
    <location>
        <begin position="663"/>
        <end position="665"/>
    </location>
</feature>
<feature type="helix" evidence="22">
    <location>
        <begin position="670"/>
        <end position="689"/>
    </location>
</feature>
<feature type="helix" evidence="22">
    <location>
        <begin position="691"/>
        <end position="693"/>
    </location>
</feature>
<feature type="helix" evidence="22">
    <location>
        <begin position="698"/>
        <end position="705"/>
    </location>
</feature>
<feature type="turn" evidence="22">
    <location>
        <begin position="706"/>
        <end position="708"/>
    </location>
</feature>
<feature type="helix" evidence="22">
    <location>
        <begin position="711"/>
        <end position="720"/>
    </location>
</feature>
<feature type="helix" evidence="22">
    <location>
        <begin position="725"/>
        <end position="736"/>
    </location>
</feature>
<feature type="helix" evidence="22">
    <location>
        <begin position="738"/>
        <end position="747"/>
    </location>
</feature>
<feature type="helix" evidence="22">
    <location>
        <begin position="751"/>
        <end position="758"/>
    </location>
</feature>
<feature type="strand" evidence="23">
    <location>
        <begin position="759"/>
        <end position="761"/>
    </location>
</feature>
<feature type="helix" evidence="22">
    <location>
        <begin position="763"/>
        <end position="769"/>
    </location>
</feature>
<feature type="turn" evidence="22">
    <location>
        <begin position="773"/>
        <end position="775"/>
    </location>
</feature>
<feature type="helix" evidence="22">
    <location>
        <begin position="776"/>
        <end position="784"/>
    </location>
</feature>
<feature type="helix" evidence="22">
    <location>
        <begin position="786"/>
        <end position="788"/>
    </location>
</feature>
<feature type="helix" evidence="24">
    <location>
        <begin position="793"/>
        <end position="800"/>
    </location>
</feature>
<feature type="helix" evidence="22">
    <location>
        <begin position="807"/>
        <end position="821"/>
    </location>
</feature>
<proteinExistence type="evidence at protein level"/>
<gene>
    <name evidence="8" type="ordered locus">aq_411</name>
</gene>
<name>AATNT_AQUAE</name>
<evidence type="ECO:0000255" key="1">
    <source>
        <dbReference type="PROSITE-ProRule" id="PRU00703"/>
    </source>
</evidence>
<evidence type="ECO:0000269" key="2">
    <source>
    </source>
</evidence>
<evidence type="ECO:0000269" key="3">
    <source>
    </source>
</evidence>
<evidence type="ECO:0000303" key="4">
    <source>
    </source>
</evidence>
<evidence type="ECO:0000305" key="5"/>
<evidence type="ECO:0000305" key="6">
    <source>
    </source>
</evidence>
<evidence type="ECO:0000305" key="7">
    <source>
    </source>
</evidence>
<evidence type="ECO:0000312" key="8">
    <source>
        <dbReference type="EMBL" id="AAC06692.1"/>
    </source>
</evidence>
<evidence type="ECO:0007744" key="9">
    <source>
        <dbReference type="PDB" id="1VFG"/>
    </source>
</evidence>
<evidence type="ECO:0007744" key="10">
    <source>
        <dbReference type="PDB" id="4WBY"/>
    </source>
</evidence>
<evidence type="ECO:0007744" key="11">
    <source>
        <dbReference type="PDB" id="4WBZ"/>
    </source>
</evidence>
<evidence type="ECO:0007744" key="12">
    <source>
        <dbReference type="PDB" id="4WC0"/>
    </source>
</evidence>
<evidence type="ECO:0007744" key="13">
    <source>
        <dbReference type="PDB" id="4WC1"/>
    </source>
</evidence>
<evidence type="ECO:0007744" key="14">
    <source>
        <dbReference type="PDB" id="4WC2"/>
    </source>
</evidence>
<evidence type="ECO:0007744" key="15">
    <source>
        <dbReference type="PDB" id="4WC3"/>
    </source>
</evidence>
<evidence type="ECO:0007744" key="16">
    <source>
        <dbReference type="PDB" id="4WC4"/>
    </source>
</evidence>
<evidence type="ECO:0007744" key="17">
    <source>
        <dbReference type="PDB" id="4WC5"/>
    </source>
</evidence>
<evidence type="ECO:0007744" key="18">
    <source>
        <dbReference type="PDB" id="4WC6"/>
    </source>
</evidence>
<evidence type="ECO:0007744" key="19">
    <source>
        <dbReference type="PDB" id="4WC7"/>
    </source>
</evidence>
<evidence type="ECO:0007744" key="20">
    <source>
        <dbReference type="PDB" id="4X0A"/>
    </source>
</evidence>
<evidence type="ECO:0007829" key="21">
    <source>
        <dbReference type="PDB" id="1VFG"/>
    </source>
</evidence>
<evidence type="ECO:0007829" key="22">
    <source>
        <dbReference type="PDB" id="4WBY"/>
    </source>
</evidence>
<evidence type="ECO:0007829" key="23">
    <source>
        <dbReference type="PDB" id="4WC0"/>
    </source>
</evidence>
<evidence type="ECO:0007829" key="24">
    <source>
        <dbReference type="PDB" id="4WC2"/>
    </source>
</evidence>
<evidence type="ECO:0007829" key="25">
    <source>
        <dbReference type="PDB" id="4WC3"/>
    </source>
</evidence>
<comment type="function">
    <text evidence="2 3">tRNA nucleotidyltransferase involved in the synthesis of the tRNA CCA terminus. Adds the terminal adenosine residue to tRNA (PubMed:11701927, PubMed:25914059). Can incorporate CMP into tRNA ending with C74C75 (tRNACC), with very weak efficiency (PubMed:25914059).</text>
</comment>
<comment type="catalytic activity">
    <reaction evidence="2 3">
        <text>a tRNA with a 3' CC end + ATP = a tRNA with a 3' CCA end + diphosphate</text>
        <dbReference type="Rhea" id="RHEA:60012"/>
        <dbReference type="Rhea" id="RHEA-COMP:10468"/>
        <dbReference type="Rhea" id="RHEA-COMP:15488"/>
        <dbReference type="ChEBI" id="CHEBI:30616"/>
        <dbReference type="ChEBI" id="CHEBI:33019"/>
        <dbReference type="ChEBI" id="CHEBI:83069"/>
        <dbReference type="ChEBI" id="CHEBI:83071"/>
    </reaction>
    <physiologicalReaction direction="left-to-right" evidence="2 3">
        <dbReference type="Rhea" id="RHEA:60013"/>
    </physiologicalReaction>
</comment>
<comment type="cofactor">
    <cofactor evidence="7">
        <name>Mg(2+)</name>
        <dbReference type="ChEBI" id="CHEBI:18420"/>
    </cofactor>
</comment>
<comment type="biophysicochemical properties">
    <kinetics>
        <KM evidence="3">98 uM for ATP</KM>
        <KM evidence="3">220 uM for CTP</KM>
        <text evidence="3">kcat is 0.10 min(-1) for incorporation of AMP into tRNACC. kcat is 0.00015 min(-1) for incorporation of CMP into tRNACC.</text>
    </kinetics>
</comment>
<comment type="domain">
    <text evidence="3 6">Adopts a seahorse-like shape and consists of four domains: head, neck, body, and tail.</text>
</comment>
<comment type="similarity">
    <text evidence="5">Belongs to the tRNA nucleotidyltransferase/poly(A) polymerase family.</text>
</comment>
<dbReference type="EC" id="2.7.7.-" evidence="2"/>
<dbReference type="EMBL" id="AE000657">
    <property type="protein sequence ID" value="AAC06692.1"/>
    <property type="molecule type" value="Genomic_DNA"/>
</dbReference>
<dbReference type="PIR" id="D70337">
    <property type="entry name" value="D70337"/>
</dbReference>
<dbReference type="RefSeq" id="NP_213288.1">
    <property type="nucleotide sequence ID" value="NC_000918.1"/>
</dbReference>
<dbReference type="RefSeq" id="WP_010880226.1">
    <property type="nucleotide sequence ID" value="NC_000918.1"/>
</dbReference>
<dbReference type="PDB" id="1VFG">
    <property type="method" value="X-ray"/>
    <property type="resolution" value="2.80 A"/>
    <property type="chains" value="A/B=443-824"/>
</dbReference>
<dbReference type="PDB" id="4WBY">
    <property type="method" value="X-ray"/>
    <property type="resolution" value="1.50 A"/>
    <property type="chains" value="A=428-824"/>
</dbReference>
<dbReference type="PDB" id="4WBZ">
    <property type="method" value="X-ray"/>
    <property type="resolution" value="3.30 A"/>
    <property type="chains" value="A/B=443-824"/>
</dbReference>
<dbReference type="PDB" id="4WC0">
    <property type="method" value="X-ray"/>
    <property type="resolution" value="3.10 A"/>
    <property type="chains" value="A/B=443-824"/>
</dbReference>
<dbReference type="PDB" id="4WC1">
    <property type="method" value="X-ray"/>
    <property type="resolution" value="3.10 A"/>
    <property type="chains" value="A/B=443-824"/>
</dbReference>
<dbReference type="PDB" id="4WC2">
    <property type="method" value="X-ray"/>
    <property type="resolution" value="2.80 A"/>
    <property type="chains" value="A=443-824"/>
</dbReference>
<dbReference type="PDB" id="4WC3">
    <property type="method" value="X-ray"/>
    <property type="resolution" value="3.10 A"/>
    <property type="chains" value="A=443-824"/>
</dbReference>
<dbReference type="PDB" id="4WC4">
    <property type="method" value="X-ray"/>
    <property type="resolution" value="3.50 A"/>
    <property type="chains" value="A=443-824"/>
</dbReference>
<dbReference type="PDB" id="4WC5">
    <property type="method" value="X-ray"/>
    <property type="resolution" value="3.41 A"/>
    <property type="chains" value="A=443-824"/>
</dbReference>
<dbReference type="PDB" id="4WC6">
    <property type="method" value="X-ray"/>
    <property type="resolution" value="3.41 A"/>
    <property type="chains" value="A=443-824"/>
</dbReference>
<dbReference type="PDB" id="4WC7">
    <property type="method" value="X-ray"/>
    <property type="resolution" value="3.10 A"/>
    <property type="chains" value="A=443-824"/>
</dbReference>
<dbReference type="PDB" id="4X0A">
    <property type="method" value="X-ray"/>
    <property type="resolution" value="3.50 A"/>
    <property type="chains" value="A=443-824"/>
</dbReference>
<dbReference type="PDB" id="4X0B">
    <property type="method" value="X-ray"/>
    <property type="resolution" value="3.20 A"/>
    <property type="chains" value="A=443-824"/>
</dbReference>
<dbReference type="PDBsum" id="1VFG"/>
<dbReference type="PDBsum" id="4WBY"/>
<dbReference type="PDBsum" id="4WBZ"/>
<dbReference type="PDBsum" id="4WC0"/>
<dbReference type="PDBsum" id="4WC1"/>
<dbReference type="PDBsum" id="4WC2"/>
<dbReference type="PDBsum" id="4WC3"/>
<dbReference type="PDBsum" id="4WC4"/>
<dbReference type="PDBsum" id="4WC5"/>
<dbReference type="PDBsum" id="4WC6"/>
<dbReference type="PDBsum" id="4WC7"/>
<dbReference type="PDBsum" id="4X0A"/>
<dbReference type="PDBsum" id="4X0B"/>
<dbReference type="SMR" id="O66728"/>
<dbReference type="STRING" id="224324.aq_411"/>
<dbReference type="EnsemblBacteria" id="AAC06692">
    <property type="protein sequence ID" value="AAC06692"/>
    <property type="gene ID" value="aq_411"/>
</dbReference>
<dbReference type="KEGG" id="aae:aq_411"/>
<dbReference type="PATRIC" id="fig|224324.8.peg.338"/>
<dbReference type="eggNOG" id="COG0517">
    <property type="taxonomic scope" value="Bacteria"/>
</dbReference>
<dbReference type="eggNOG" id="COG0617">
    <property type="taxonomic scope" value="Bacteria"/>
</dbReference>
<dbReference type="eggNOG" id="COG0618">
    <property type="taxonomic scope" value="Bacteria"/>
</dbReference>
<dbReference type="HOGENOM" id="CLU_015961_5_0_0"/>
<dbReference type="InParanoid" id="O66728"/>
<dbReference type="OrthoDB" id="9805698at2"/>
<dbReference type="EvolutionaryTrace" id="O66728"/>
<dbReference type="Proteomes" id="UP000000798">
    <property type="component" value="Chromosome"/>
</dbReference>
<dbReference type="GO" id="GO:0005524">
    <property type="term" value="F:ATP binding"/>
    <property type="evidence" value="ECO:0007669"/>
    <property type="project" value="UniProtKB-KW"/>
</dbReference>
<dbReference type="GO" id="GO:0052929">
    <property type="term" value="F:ATP:3'-cytidine-cytidine-tRNA adenylyltransferase activity"/>
    <property type="evidence" value="ECO:0007669"/>
    <property type="project" value="RHEA"/>
</dbReference>
<dbReference type="GO" id="GO:0046872">
    <property type="term" value="F:metal ion binding"/>
    <property type="evidence" value="ECO:0007669"/>
    <property type="project" value="UniProtKB-KW"/>
</dbReference>
<dbReference type="GO" id="GO:0000049">
    <property type="term" value="F:tRNA binding"/>
    <property type="evidence" value="ECO:0007669"/>
    <property type="project" value="UniProtKB-KW"/>
</dbReference>
<dbReference type="GO" id="GO:0008033">
    <property type="term" value="P:tRNA processing"/>
    <property type="evidence" value="ECO:0007669"/>
    <property type="project" value="UniProtKB-KW"/>
</dbReference>
<dbReference type="CDD" id="cd02205">
    <property type="entry name" value="CBS_pair_SF"/>
    <property type="match status" value="1"/>
</dbReference>
<dbReference type="CDD" id="cd05398">
    <property type="entry name" value="NT_ClassII-CCAase"/>
    <property type="match status" value="1"/>
</dbReference>
<dbReference type="Gene3D" id="3.10.310.30">
    <property type="match status" value="1"/>
</dbReference>
<dbReference type="Gene3D" id="3.30.460.10">
    <property type="entry name" value="Beta Polymerase, domain 2"/>
    <property type="match status" value="1"/>
</dbReference>
<dbReference type="Gene3D" id="3.10.580.10">
    <property type="entry name" value="CBS-domain"/>
    <property type="match status" value="2"/>
</dbReference>
<dbReference type="Gene3D" id="1.10.3090.10">
    <property type="entry name" value="cca-adding enzyme, domain 2"/>
    <property type="match status" value="1"/>
</dbReference>
<dbReference type="Gene3D" id="3.90.1640.10">
    <property type="entry name" value="inorganic pyrophosphatase (n-terminal core)"/>
    <property type="match status" value="1"/>
</dbReference>
<dbReference type="InterPro" id="IPR000644">
    <property type="entry name" value="CBS_dom"/>
</dbReference>
<dbReference type="InterPro" id="IPR046342">
    <property type="entry name" value="CBS_dom_sf"/>
</dbReference>
<dbReference type="InterPro" id="IPR038763">
    <property type="entry name" value="DHH_sf"/>
</dbReference>
<dbReference type="InterPro" id="IPR003156">
    <property type="entry name" value="DHHA1_dom"/>
</dbReference>
<dbReference type="InterPro" id="IPR043519">
    <property type="entry name" value="NT_sf"/>
</dbReference>
<dbReference type="InterPro" id="IPR002646">
    <property type="entry name" value="PolA_pol_head_dom"/>
</dbReference>
<dbReference type="InterPro" id="IPR052390">
    <property type="entry name" value="tRNA_nt/polyA_polymerase"/>
</dbReference>
<dbReference type="PANTHER" id="PTHR47788:SF1">
    <property type="entry name" value="A-ADDING TRNA NUCLEOTIDYLTRANSFERASE"/>
    <property type="match status" value="1"/>
</dbReference>
<dbReference type="PANTHER" id="PTHR47788">
    <property type="entry name" value="POLYA POLYMERASE"/>
    <property type="match status" value="1"/>
</dbReference>
<dbReference type="Pfam" id="PF00571">
    <property type="entry name" value="CBS"/>
    <property type="match status" value="2"/>
</dbReference>
<dbReference type="Pfam" id="PF02272">
    <property type="entry name" value="DHHA1"/>
    <property type="match status" value="1"/>
</dbReference>
<dbReference type="Pfam" id="PF01743">
    <property type="entry name" value="PolyA_pol"/>
    <property type="match status" value="1"/>
</dbReference>
<dbReference type="SMART" id="SM00116">
    <property type="entry name" value="CBS"/>
    <property type="match status" value="2"/>
</dbReference>
<dbReference type="SUPFAM" id="SSF54631">
    <property type="entry name" value="CBS-domain pair"/>
    <property type="match status" value="1"/>
</dbReference>
<dbReference type="SUPFAM" id="SSF64182">
    <property type="entry name" value="DHH phosphoesterases"/>
    <property type="match status" value="1"/>
</dbReference>
<dbReference type="SUPFAM" id="SSF81301">
    <property type="entry name" value="Nucleotidyltransferase"/>
    <property type="match status" value="1"/>
</dbReference>
<dbReference type="SUPFAM" id="SSF81891">
    <property type="entry name" value="Poly A polymerase C-terminal region-like"/>
    <property type="match status" value="1"/>
</dbReference>
<dbReference type="PROSITE" id="PS51371">
    <property type="entry name" value="CBS"/>
    <property type="match status" value="2"/>
</dbReference>
<reference key="1">
    <citation type="journal article" date="1998" name="Nature">
        <title>The complete genome of the hyperthermophilic bacterium Aquifex aeolicus.</title>
        <authorList>
            <person name="Deckert G."/>
            <person name="Warren P.V."/>
            <person name="Gaasterland T."/>
            <person name="Young W.G."/>
            <person name="Lenox A.L."/>
            <person name="Graham D.E."/>
            <person name="Overbeek R."/>
            <person name="Snead M.A."/>
            <person name="Keller M."/>
            <person name="Aujay M."/>
            <person name="Huber R."/>
            <person name="Feldman R.A."/>
            <person name="Short J.M."/>
            <person name="Olsen G.J."/>
            <person name="Swanson R.V."/>
        </authorList>
    </citation>
    <scope>NUCLEOTIDE SEQUENCE [LARGE SCALE GENOMIC DNA]</scope>
    <source>
        <strain>VF5</strain>
    </source>
</reference>
<reference key="2">
    <citation type="journal article" date="2001" name="Science">
        <title>Collaboration between CC- and A-adding enzymes to build and repair the 3'-terminal CCA of tRNA in Aquifex aeolicus.</title>
        <authorList>
            <person name="Tomita K."/>
            <person name="Weiner A.M."/>
        </authorList>
    </citation>
    <scope>FUNCTION</scope>
    <scope>CATALYTIC ACTIVITY</scope>
</reference>
<reference evidence="9" key="3">
    <citation type="journal article" date="2004" name="Nature">
        <title>Structural basis for template-independent RNA polymerization.</title>
        <authorList>
            <person name="Tomita K."/>
            <person name="Fukai S."/>
            <person name="Ishitani R."/>
            <person name="Ueda T."/>
            <person name="Takeuchi N."/>
            <person name="Vassylyev D.G."/>
            <person name="Nureki O."/>
        </authorList>
    </citation>
    <scope>X-RAY CRYSTALLOGRAPHY (2.80 ANGSTROMS) OF 443-824 IN COMPLEX WITH ATP ANALOG</scope>
    <scope>DOMAIN</scope>
</reference>
<reference evidence="10 11 12 13 14 15 16 17 18 19 20" key="4">
    <citation type="journal article" date="2015" name="Structure">
        <title>Measurement of acceptor-TC helix length of tRNA for terminal A76-addition by A-adding enzyme.</title>
        <authorList>
            <person name="Yamashita S."/>
            <person name="Martinez A."/>
            <person name="Tomita K."/>
        </authorList>
    </citation>
    <scope>X-RAY CRYSTALLOGRAPHY (1.50 ANGSTROMS) OF 428-824 IN COMPLEXES WITH ATP; CTP; TRNA AND MAGNESIUM</scope>
    <scope>FUNCTION</scope>
    <scope>CATALYTIC ACTIVITY</scope>
    <scope>COFACTOR</scope>
    <scope>BIOPHYSICOCHEMICAL PROPERTIES</scope>
    <scope>DOMAIN</scope>
</reference>
<keyword id="KW-0002">3D-structure</keyword>
<keyword id="KW-0067">ATP-binding</keyword>
<keyword id="KW-0129">CBS domain</keyword>
<keyword id="KW-0460">Magnesium</keyword>
<keyword id="KW-0479">Metal-binding</keyword>
<keyword id="KW-0547">Nucleotide-binding</keyword>
<keyword id="KW-0548">Nucleotidyltransferase</keyword>
<keyword id="KW-1185">Reference proteome</keyword>
<keyword id="KW-0677">Repeat</keyword>
<keyword id="KW-0694">RNA-binding</keyword>
<keyword id="KW-0808">Transferase</keyword>
<keyword id="KW-0819">tRNA processing</keyword>
<keyword id="KW-0820">tRNA-binding</keyword>
<organism>
    <name type="scientific">Aquifex aeolicus (strain VF5)</name>
    <dbReference type="NCBI Taxonomy" id="224324"/>
    <lineage>
        <taxon>Bacteria</taxon>
        <taxon>Pseudomonadati</taxon>
        <taxon>Aquificota</taxon>
        <taxon>Aquificia</taxon>
        <taxon>Aquificales</taxon>
        <taxon>Aquificaceae</taxon>
        <taxon>Aquifex</taxon>
    </lineage>
</organism>